<comment type="miscellaneous">
    <text>This delta chain lacks the domain corresponding to the CH2 domain of human delta chain.</text>
</comment>
<accession>P01883</accession>
<feature type="chain" id="PRO_0000153573" description="Ig delta chain C region">
    <location>
        <begin position="1" status="less than"/>
        <end position="202"/>
    </location>
</feature>
<feature type="domain" description="Ig-like">
    <location>
        <begin position="66"/>
        <end position="178"/>
    </location>
</feature>
<feature type="region of interest" description="Disordered" evidence="1">
    <location>
        <begin position="32"/>
        <end position="58"/>
    </location>
</feature>
<feature type="compositionally biased region" description="Polar residues" evidence="1">
    <location>
        <begin position="41"/>
        <end position="56"/>
    </location>
</feature>
<feature type="non-terminal residue">
    <location>
        <position position="1"/>
    </location>
</feature>
<evidence type="ECO:0000256" key="1">
    <source>
        <dbReference type="SAM" id="MobiDB-lite"/>
    </source>
</evidence>
<sequence length="202" mass="22423">KDEYITILQVSVPAPNLSPNLTCTITNTSKKKSKTFKLPETRNSQSSKKANPTPQAKNHYIEATKPTATKNIVGAMAPSNLNVNILTTFTHHQMSSWLMCEVSGFYPEDIHLWWLSAQTKMDPINFVTAQPVRQSGDKFQIWSVLRLPVALSPSLDTYTCVVEHEASQTKLNASKSLEISGCYHLLPESDGPPRRPDGPAFP</sequence>
<dbReference type="EMBL" id="J00741">
    <property type="protein sequence ID" value="AAA41377.1"/>
    <property type="molecule type" value="mRNA"/>
</dbReference>
<dbReference type="PIR" id="A02178">
    <property type="entry name" value="DHRT"/>
</dbReference>
<dbReference type="SMR" id="P01883"/>
<dbReference type="FunCoup" id="P01883">
    <property type="interactions" value="52"/>
</dbReference>
<dbReference type="InParanoid" id="P01883"/>
<dbReference type="PhylomeDB" id="P01883"/>
<dbReference type="Proteomes" id="UP000002494">
    <property type="component" value="Unplaced"/>
</dbReference>
<dbReference type="Gene3D" id="2.60.40.10">
    <property type="entry name" value="Immunoglobulins"/>
    <property type="match status" value="1"/>
</dbReference>
<dbReference type="InterPro" id="IPR007110">
    <property type="entry name" value="Ig-like_dom"/>
</dbReference>
<dbReference type="InterPro" id="IPR036179">
    <property type="entry name" value="Ig-like_dom_sf"/>
</dbReference>
<dbReference type="InterPro" id="IPR013783">
    <property type="entry name" value="Ig-like_fold"/>
</dbReference>
<dbReference type="InterPro" id="IPR003006">
    <property type="entry name" value="Ig/MHC_CS"/>
</dbReference>
<dbReference type="InterPro" id="IPR003597">
    <property type="entry name" value="Ig_C1-set"/>
</dbReference>
<dbReference type="InterPro" id="IPR050380">
    <property type="entry name" value="Immune_Resp_Modulators"/>
</dbReference>
<dbReference type="PANTHER" id="PTHR23411">
    <property type="entry name" value="TAPASIN"/>
    <property type="match status" value="1"/>
</dbReference>
<dbReference type="Pfam" id="PF07654">
    <property type="entry name" value="C1-set"/>
    <property type="match status" value="1"/>
</dbReference>
<dbReference type="SMART" id="SM00407">
    <property type="entry name" value="IGc1"/>
    <property type="match status" value="1"/>
</dbReference>
<dbReference type="SUPFAM" id="SSF48726">
    <property type="entry name" value="Immunoglobulin"/>
    <property type="match status" value="1"/>
</dbReference>
<dbReference type="PROSITE" id="PS50835">
    <property type="entry name" value="IG_LIKE"/>
    <property type="match status" value="1"/>
</dbReference>
<dbReference type="PROSITE" id="PS00290">
    <property type="entry name" value="IG_MHC"/>
    <property type="match status" value="1"/>
</dbReference>
<organism>
    <name type="scientific">Rattus norvegicus</name>
    <name type="common">Rat</name>
    <dbReference type="NCBI Taxonomy" id="10116"/>
    <lineage>
        <taxon>Eukaryota</taxon>
        <taxon>Metazoa</taxon>
        <taxon>Chordata</taxon>
        <taxon>Craniata</taxon>
        <taxon>Vertebrata</taxon>
        <taxon>Euteleostomi</taxon>
        <taxon>Mammalia</taxon>
        <taxon>Eutheria</taxon>
        <taxon>Euarchontoglires</taxon>
        <taxon>Glires</taxon>
        <taxon>Rodentia</taxon>
        <taxon>Myomorpha</taxon>
        <taxon>Muroidea</taxon>
        <taxon>Muridae</taxon>
        <taxon>Murinae</taxon>
        <taxon>Rattus</taxon>
    </lineage>
</organism>
<keyword id="KW-0393">Immunoglobulin domain</keyword>
<keyword id="KW-1185">Reference proteome</keyword>
<name>IGHD_RAT</name>
<protein>
    <recommendedName>
        <fullName>Ig delta chain C region</fullName>
    </recommendedName>
</protein>
<reference key="1">
    <citation type="journal article" date="1982" name="Gene">
        <title>Rat immunoglobulin delta heavy chain gene: nucleotide sequence derived from cloned cDNA.</title>
        <authorList>
            <person name="Sire J."/>
            <person name="Auffray C."/>
            <person name="Jordan B.R."/>
        </authorList>
    </citation>
    <scope>NUCLEOTIDE SEQUENCE [MRNA]</scope>
</reference>
<proteinExistence type="evidence at transcript level"/>